<dbReference type="EC" id="3.1.3.2" evidence="1 3"/>
<dbReference type="EMBL" id="CP000653">
    <property type="protein sequence ID" value="ABP58948.1"/>
    <property type="molecule type" value="Genomic_DNA"/>
</dbReference>
<dbReference type="RefSeq" id="WP_011915521.1">
    <property type="nucleotide sequence ID" value="NC_009436.1"/>
</dbReference>
<dbReference type="SMR" id="A4W5G8"/>
<dbReference type="STRING" id="399742.Ent638_0259"/>
<dbReference type="KEGG" id="ent:Ent638_0259"/>
<dbReference type="eggNOG" id="COG3700">
    <property type="taxonomic scope" value="Bacteria"/>
</dbReference>
<dbReference type="HOGENOM" id="CLU_081496_0_0_6"/>
<dbReference type="OrthoDB" id="2234478at2"/>
<dbReference type="Proteomes" id="UP000000230">
    <property type="component" value="Chromosome"/>
</dbReference>
<dbReference type="GO" id="GO:0030288">
    <property type="term" value="C:outer membrane-bounded periplasmic space"/>
    <property type="evidence" value="ECO:0007669"/>
    <property type="project" value="InterPro"/>
</dbReference>
<dbReference type="GO" id="GO:0003993">
    <property type="term" value="F:acid phosphatase activity"/>
    <property type="evidence" value="ECO:0007669"/>
    <property type="project" value="UniProtKB-EC"/>
</dbReference>
<dbReference type="GO" id="GO:0046872">
    <property type="term" value="F:metal ion binding"/>
    <property type="evidence" value="ECO:0007669"/>
    <property type="project" value="UniProtKB-KW"/>
</dbReference>
<dbReference type="CDD" id="cd07499">
    <property type="entry name" value="HAD_CBAP"/>
    <property type="match status" value="1"/>
</dbReference>
<dbReference type="Gene3D" id="3.40.50.1000">
    <property type="entry name" value="HAD superfamily/HAD-like"/>
    <property type="match status" value="1"/>
</dbReference>
<dbReference type="InterPro" id="IPR005519">
    <property type="entry name" value="Acid_phosphat_B-like"/>
</dbReference>
<dbReference type="InterPro" id="IPR036412">
    <property type="entry name" value="HAD-like_sf"/>
</dbReference>
<dbReference type="InterPro" id="IPR010025">
    <property type="entry name" value="HAD-SF_ppase_IIIB_AphA"/>
</dbReference>
<dbReference type="InterPro" id="IPR023214">
    <property type="entry name" value="HAD_sf"/>
</dbReference>
<dbReference type="NCBIfam" id="TIGR01672">
    <property type="entry name" value="AphA"/>
    <property type="match status" value="1"/>
</dbReference>
<dbReference type="Pfam" id="PF03767">
    <property type="entry name" value="Acid_phosphat_B"/>
    <property type="match status" value="1"/>
</dbReference>
<dbReference type="PIRSF" id="PIRSF017818">
    <property type="entry name" value="Acid_Ptase_B"/>
    <property type="match status" value="1"/>
</dbReference>
<dbReference type="SFLD" id="SFLDG01127">
    <property type="entry name" value="C1.3:_Acid_Phosphatase_Like"/>
    <property type="match status" value="1"/>
</dbReference>
<dbReference type="SFLD" id="SFLDS00003">
    <property type="entry name" value="Haloacid_Dehalogenase"/>
    <property type="match status" value="1"/>
</dbReference>
<dbReference type="SUPFAM" id="SSF56784">
    <property type="entry name" value="HAD-like"/>
    <property type="match status" value="1"/>
</dbReference>
<name>APHA_ENT38</name>
<evidence type="ECO:0000250" key="1">
    <source>
        <dbReference type="UniProtKB" id="P0AE22"/>
    </source>
</evidence>
<evidence type="ECO:0000255" key="2"/>
<evidence type="ECO:0000312" key="3">
    <source>
        <dbReference type="EMBL" id="ABP58948.1"/>
    </source>
</evidence>
<feature type="signal peptide" evidence="2">
    <location>
        <begin position="1"/>
        <end position="25"/>
    </location>
</feature>
<feature type="chain" id="PRO_5000237561" description="Class B acid phosphatase" evidence="2">
    <location>
        <begin position="26"/>
        <end position="237"/>
    </location>
</feature>
<feature type="active site" description="Nucleophile" evidence="1">
    <location>
        <position position="69"/>
    </location>
</feature>
<feature type="active site" description="Proton donor" evidence="1">
    <location>
        <position position="71"/>
    </location>
</feature>
<feature type="binding site" evidence="1">
    <location>
        <position position="69"/>
    </location>
    <ligand>
        <name>Mg(2+)</name>
        <dbReference type="ChEBI" id="CHEBI:18420"/>
    </ligand>
</feature>
<feature type="binding site" evidence="1">
    <location>
        <position position="71"/>
    </location>
    <ligand>
        <name>Mg(2+)</name>
        <dbReference type="ChEBI" id="CHEBI:18420"/>
    </ligand>
</feature>
<feature type="binding site" evidence="1">
    <location>
        <begin position="137"/>
        <end position="138"/>
    </location>
    <ligand>
        <name>substrate</name>
    </ligand>
</feature>
<feature type="binding site" evidence="1">
    <location>
        <position position="177"/>
    </location>
    <ligand>
        <name>substrate</name>
    </ligand>
</feature>
<feature type="binding site" evidence="1">
    <location>
        <position position="192"/>
    </location>
    <ligand>
        <name>Mg(2+)</name>
        <dbReference type="ChEBI" id="CHEBI:18420"/>
    </ligand>
</feature>
<accession>A4W5G8</accession>
<keyword id="KW-0378">Hydrolase</keyword>
<keyword id="KW-0460">Magnesium</keyword>
<keyword id="KW-0479">Metal-binding</keyword>
<keyword id="KW-0574">Periplasm</keyword>
<keyword id="KW-0732">Signal</keyword>
<comment type="function">
    <text evidence="1">Dephosphorylates several organic phosphate monoesters. Also has a phosphotransferase activity catalyzing the transfer of low-energy phosphate groups from organic phosphate monoesters to free hydroxyl groups of various organic compounds (By similarity).</text>
</comment>
<comment type="catalytic activity">
    <reaction evidence="1">
        <text>a phosphate monoester + H2O = an alcohol + phosphate</text>
        <dbReference type="Rhea" id="RHEA:15017"/>
        <dbReference type="ChEBI" id="CHEBI:15377"/>
        <dbReference type="ChEBI" id="CHEBI:30879"/>
        <dbReference type="ChEBI" id="CHEBI:43474"/>
        <dbReference type="ChEBI" id="CHEBI:67140"/>
        <dbReference type="EC" id="3.1.3.2"/>
    </reaction>
</comment>
<comment type="cofactor">
    <cofactor evidence="1">
        <name>Mg(2+)</name>
        <dbReference type="ChEBI" id="CHEBI:18420"/>
    </cofactor>
    <text evidence="1">Binds 1 Mg(2+) ion per subunit.</text>
</comment>
<comment type="subunit">
    <text evidence="1">Homotetramer.</text>
</comment>
<comment type="subcellular location">
    <subcellularLocation>
        <location evidence="1">Periplasm</location>
    </subcellularLocation>
</comment>
<comment type="similarity">
    <text evidence="1">Belongs to the class B bacterial acid phosphatase family.</text>
</comment>
<proteinExistence type="inferred from homology"/>
<gene>
    <name evidence="1" type="primary">aphA</name>
    <name type="ordered locus">Ent638_0259</name>
</gene>
<protein>
    <recommendedName>
        <fullName evidence="1">Class B acid phosphatase</fullName>
        <shortName evidence="1">CBAP</shortName>
        <ecNumber evidence="1 3">3.1.3.2</ecNumber>
    </recommendedName>
</protein>
<organism>
    <name type="scientific">Enterobacter sp. (strain 638)</name>
    <dbReference type="NCBI Taxonomy" id="399742"/>
    <lineage>
        <taxon>Bacteria</taxon>
        <taxon>Pseudomonadati</taxon>
        <taxon>Pseudomonadota</taxon>
        <taxon>Gammaproteobacteria</taxon>
        <taxon>Enterobacterales</taxon>
        <taxon>Enterobacteriaceae</taxon>
        <taxon>Enterobacter</taxon>
    </lineage>
</organism>
<sequence>MRKITLALSAACLLFSLNNAVVARASAPTPLYTGTTAAILAEQAPIHWVSVAQIENSLMGRAPMAVGFDIDDTVLFSSPGFWRGKKTFSPASEEYLKNPEFWEKMNNGWDEFSIPKEVGRALIAMHVKRGDSIYFVTGRSQTKTETVSKTLQGDFAIPSANMNPVIFAGDKAGQNTKTQWLEQKNIKVFYGDSDNDITAARDVGARGIRVLRASNSTYRPLPMAGAFGEEVIVNSEY</sequence>
<reference key="1">
    <citation type="journal article" date="2010" name="PLoS Genet.">
        <title>Genome sequence of the plant growth promoting endophytic bacterium Enterobacter sp. 638.</title>
        <authorList>
            <person name="Taghavi S."/>
            <person name="van der Lelie D."/>
            <person name="Hoffman A."/>
            <person name="Zhang Y.B."/>
            <person name="Walla M.D."/>
            <person name="Vangronsveld J."/>
            <person name="Newman L."/>
            <person name="Monchy S."/>
        </authorList>
    </citation>
    <scope>NUCLEOTIDE SEQUENCE [LARGE SCALE GENOMIC DNA]</scope>
    <source>
        <strain>638</strain>
    </source>
</reference>